<name>PYRG_BUCBP</name>
<accession>P59577</accession>
<protein>
    <recommendedName>
        <fullName evidence="1">CTP synthase</fullName>
        <ecNumber evidence="1">6.3.4.2</ecNumber>
    </recommendedName>
    <alternativeName>
        <fullName evidence="1">Cytidine 5'-triphosphate synthase</fullName>
    </alternativeName>
    <alternativeName>
        <fullName evidence="1">Cytidine triphosphate synthetase</fullName>
        <shortName evidence="1">CTP synthetase</shortName>
        <shortName evidence="1">CTPS</shortName>
    </alternativeName>
    <alternativeName>
        <fullName evidence="1">UTP--ammonia ligase</fullName>
    </alternativeName>
</protein>
<dbReference type="EC" id="6.3.4.2" evidence="1"/>
<dbReference type="EMBL" id="AE016826">
    <property type="protein sequence ID" value="AAO27090.1"/>
    <property type="molecule type" value="Genomic_DNA"/>
</dbReference>
<dbReference type="RefSeq" id="WP_011091491.1">
    <property type="nucleotide sequence ID" value="NC_004545.1"/>
</dbReference>
<dbReference type="SMR" id="P59577"/>
<dbReference type="STRING" id="224915.bbp_376"/>
<dbReference type="KEGG" id="bab:bbp_376"/>
<dbReference type="eggNOG" id="COG0504">
    <property type="taxonomic scope" value="Bacteria"/>
</dbReference>
<dbReference type="HOGENOM" id="CLU_011675_5_0_6"/>
<dbReference type="OrthoDB" id="9801107at2"/>
<dbReference type="UniPathway" id="UPA00159">
    <property type="reaction ID" value="UER00277"/>
</dbReference>
<dbReference type="Proteomes" id="UP000000601">
    <property type="component" value="Chromosome"/>
</dbReference>
<dbReference type="GO" id="GO:0005829">
    <property type="term" value="C:cytosol"/>
    <property type="evidence" value="ECO:0007669"/>
    <property type="project" value="TreeGrafter"/>
</dbReference>
<dbReference type="GO" id="GO:0005524">
    <property type="term" value="F:ATP binding"/>
    <property type="evidence" value="ECO:0007669"/>
    <property type="project" value="UniProtKB-KW"/>
</dbReference>
<dbReference type="GO" id="GO:0003883">
    <property type="term" value="F:CTP synthase activity"/>
    <property type="evidence" value="ECO:0007669"/>
    <property type="project" value="UniProtKB-UniRule"/>
</dbReference>
<dbReference type="GO" id="GO:0004359">
    <property type="term" value="F:glutaminase activity"/>
    <property type="evidence" value="ECO:0007669"/>
    <property type="project" value="RHEA"/>
</dbReference>
<dbReference type="GO" id="GO:0042802">
    <property type="term" value="F:identical protein binding"/>
    <property type="evidence" value="ECO:0007669"/>
    <property type="project" value="TreeGrafter"/>
</dbReference>
<dbReference type="GO" id="GO:0046872">
    <property type="term" value="F:metal ion binding"/>
    <property type="evidence" value="ECO:0007669"/>
    <property type="project" value="UniProtKB-KW"/>
</dbReference>
<dbReference type="GO" id="GO:0044210">
    <property type="term" value="P:'de novo' CTP biosynthetic process"/>
    <property type="evidence" value="ECO:0007669"/>
    <property type="project" value="UniProtKB-UniRule"/>
</dbReference>
<dbReference type="GO" id="GO:0019856">
    <property type="term" value="P:pyrimidine nucleobase biosynthetic process"/>
    <property type="evidence" value="ECO:0007669"/>
    <property type="project" value="TreeGrafter"/>
</dbReference>
<dbReference type="CDD" id="cd03113">
    <property type="entry name" value="CTPS_N"/>
    <property type="match status" value="1"/>
</dbReference>
<dbReference type="CDD" id="cd01746">
    <property type="entry name" value="GATase1_CTP_Synthase"/>
    <property type="match status" value="1"/>
</dbReference>
<dbReference type="FunFam" id="3.40.50.300:FF:000009">
    <property type="entry name" value="CTP synthase"/>
    <property type="match status" value="1"/>
</dbReference>
<dbReference type="FunFam" id="3.40.50.880:FF:000002">
    <property type="entry name" value="CTP synthase"/>
    <property type="match status" value="1"/>
</dbReference>
<dbReference type="Gene3D" id="3.40.50.880">
    <property type="match status" value="1"/>
</dbReference>
<dbReference type="Gene3D" id="3.40.50.300">
    <property type="entry name" value="P-loop containing nucleotide triphosphate hydrolases"/>
    <property type="match status" value="1"/>
</dbReference>
<dbReference type="HAMAP" id="MF_01227">
    <property type="entry name" value="PyrG"/>
    <property type="match status" value="1"/>
</dbReference>
<dbReference type="InterPro" id="IPR029062">
    <property type="entry name" value="Class_I_gatase-like"/>
</dbReference>
<dbReference type="InterPro" id="IPR004468">
    <property type="entry name" value="CTP_synthase"/>
</dbReference>
<dbReference type="InterPro" id="IPR017456">
    <property type="entry name" value="CTP_synthase_N"/>
</dbReference>
<dbReference type="InterPro" id="IPR017926">
    <property type="entry name" value="GATASE"/>
</dbReference>
<dbReference type="InterPro" id="IPR033828">
    <property type="entry name" value="GATase1_CTP_Synthase"/>
</dbReference>
<dbReference type="InterPro" id="IPR027417">
    <property type="entry name" value="P-loop_NTPase"/>
</dbReference>
<dbReference type="NCBIfam" id="NF003792">
    <property type="entry name" value="PRK05380.1"/>
    <property type="match status" value="1"/>
</dbReference>
<dbReference type="NCBIfam" id="TIGR00337">
    <property type="entry name" value="PyrG"/>
    <property type="match status" value="1"/>
</dbReference>
<dbReference type="PANTHER" id="PTHR11550">
    <property type="entry name" value="CTP SYNTHASE"/>
    <property type="match status" value="1"/>
</dbReference>
<dbReference type="PANTHER" id="PTHR11550:SF0">
    <property type="entry name" value="CTP SYNTHASE-RELATED"/>
    <property type="match status" value="1"/>
</dbReference>
<dbReference type="Pfam" id="PF06418">
    <property type="entry name" value="CTP_synth_N"/>
    <property type="match status" value="1"/>
</dbReference>
<dbReference type="Pfam" id="PF00117">
    <property type="entry name" value="GATase"/>
    <property type="match status" value="1"/>
</dbReference>
<dbReference type="SUPFAM" id="SSF52317">
    <property type="entry name" value="Class I glutamine amidotransferase-like"/>
    <property type="match status" value="1"/>
</dbReference>
<dbReference type="SUPFAM" id="SSF52540">
    <property type="entry name" value="P-loop containing nucleoside triphosphate hydrolases"/>
    <property type="match status" value="1"/>
</dbReference>
<dbReference type="PROSITE" id="PS51273">
    <property type="entry name" value="GATASE_TYPE_1"/>
    <property type="match status" value="1"/>
</dbReference>
<feature type="chain" id="PRO_0000138171" description="CTP synthase">
    <location>
        <begin position="1"/>
        <end position="544"/>
    </location>
</feature>
<feature type="domain" description="Glutamine amidotransferase type-1" evidence="1">
    <location>
        <begin position="291"/>
        <end position="541"/>
    </location>
</feature>
<feature type="region of interest" description="Amidoligase domain" evidence="1">
    <location>
        <begin position="1"/>
        <end position="266"/>
    </location>
</feature>
<feature type="active site" description="Nucleophile; for glutamine hydrolysis" evidence="1">
    <location>
        <position position="379"/>
    </location>
</feature>
<feature type="active site" evidence="1">
    <location>
        <position position="514"/>
    </location>
</feature>
<feature type="active site" evidence="1">
    <location>
        <position position="516"/>
    </location>
</feature>
<feature type="binding site" evidence="1">
    <location>
        <position position="14"/>
    </location>
    <ligand>
        <name>CTP</name>
        <dbReference type="ChEBI" id="CHEBI:37563"/>
        <note>allosteric inhibitor</note>
    </ligand>
</feature>
<feature type="binding site" evidence="1">
    <location>
        <position position="14"/>
    </location>
    <ligand>
        <name>UTP</name>
        <dbReference type="ChEBI" id="CHEBI:46398"/>
    </ligand>
</feature>
<feature type="binding site" evidence="1">
    <location>
        <begin position="15"/>
        <end position="20"/>
    </location>
    <ligand>
        <name>ATP</name>
        <dbReference type="ChEBI" id="CHEBI:30616"/>
    </ligand>
</feature>
<feature type="binding site" evidence="1">
    <location>
        <position position="72"/>
    </location>
    <ligand>
        <name>ATP</name>
        <dbReference type="ChEBI" id="CHEBI:30616"/>
    </ligand>
</feature>
<feature type="binding site" evidence="1">
    <location>
        <position position="72"/>
    </location>
    <ligand>
        <name>Mg(2+)</name>
        <dbReference type="ChEBI" id="CHEBI:18420"/>
    </ligand>
</feature>
<feature type="binding site" evidence="1">
    <location>
        <position position="140"/>
    </location>
    <ligand>
        <name>Mg(2+)</name>
        <dbReference type="ChEBI" id="CHEBI:18420"/>
    </ligand>
</feature>
<feature type="binding site" evidence="1">
    <location>
        <begin position="147"/>
        <end position="149"/>
    </location>
    <ligand>
        <name>CTP</name>
        <dbReference type="ChEBI" id="CHEBI:37563"/>
        <note>allosteric inhibitor</note>
    </ligand>
</feature>
<feature type="binding site" evidence="1">
    <location>
        <begin position="187"/>
        <end position="192"/>
    </location>
    <ligand>
        <name>CTP</name>
        <dbReference type="ChEBI" id="CHEBI:37563"/>
        <note>allosteric inhibitor</note>
    </ligand>
</feature>
<feature type="binding site" evidence="1">
    <location>
        <begin position="187"/>
        <end position="192"/>
    </location>
    <ligand>
        <name>UTP</name>
        <dbReference type="ChEBI" id="CHEBI:46398"/>
    </ligand>
</feature>
<feature type="binding site" evidence="1">
    <location>
        <position position="223"/>
    </location>
    <ligand>
        <name>CTP</name>
        <dbReference type="ChEBI" id="CHEBI:37563"/>
        <note>allosteric inhibitor</note>
    </ligand>
</feature>
<feature type="binding site" evidence="1">
    <location>
        <position position="223"/>
    </location>
    <ligand>
        <name>UTP</name>
        <dbReference type="ChEBI" id="CHEBI:46398"/>
    </ligand>
</feature>
<feature type="binding site" evidence="1">
    <location>
        <position position="352"/>
    </location>
    <ligand>
        <name>L-glutamine</name>
        <dbReference type="ChEBI" id="CHEBI:58359"/>
    </ligand>
</feature>
<feature type="binding site" evidence="1">
    <location>
        <begin position="380"/>
        <end position="383"/>
    </location>
    <ligand>
        <name>L-glutamine</name>
        <dbReference type="ChEBI" id="CHEBI:58359"/>
    </ligand>
</feature>
<feature type="binding site" evidence="1">
    <location>
        <position position="403"/>
    </location>
    <ligand>
        <name>L-glutamine</name>
        <dbReference type="ChEBI" id="CHEBI:58359"/>
    </ligand>
</feature>
<feature type="binding site" evidence="1">
    <location>
        <position position="469"/>
    </location>
    <ligand>
        <name>L-glutamine</name>
        <dbReference type="ChEBI" id="CHEBI:58359"/>
    </ligand>
</feature>
<proteinExistence type="inferred from homology"/>
<keyword id="KW-0067">ATP-binding</keyword>
<keyword id="KW-0315">Glutamine amidotransferase</keyword>
<keyword id="KW-0436">Ligase</keyword>
<keyword id="KW-0460">Magnesium</keyword>
<keyword id="KW-0479">Metal-binding</keyword>
<keyword id="KW-0547">Nucleotide-binding</keyword>
<keyword id="KW-0665">Pyrimidine biosynthesis</keyword>
<keyword id="KW-1185">Reference proteome</keyword>
<comment type="function">
    <text evidence="1">Catalyzes the ATP-dependent amination of UTP to CTP with either L-glutamine or ammonia as the source of nitrogen. Regulates intracellular CTP levels through interactions with the four ribonucleotide triphosphates.</text>
</comment>
<comment type="catalytic activity">
    <reaction evidence="1">
        <text>UTP + L-glutamine + ATP + H2O = CTP + L-glutamate + ADP + phosphate + 2 H(+)</text>
        <dbReference type="Rhea" id="RHEA:26426"/>
        <dbReference type="ChEBI" id="CHEBI:15377"/>
        <dbReference type="ChEBI" id="CHEBI:15378"/>
        <dbReference type="ChEBI" id="CHEBI:29985"/>
        <dbReference type="ChEBI" id="CHEBI:30616"/>
        <dbReference type="ChEBI" id="CHEBI:37563"/>
        <dbReference type="ChEBI" id="CHEBI:43474"/>
        <dbReference type="ChEBI" id="CHEBI:46398"/>
        <dbReference type="ChEBI" id="CHEBI:58359"/>
        <dbReference type="ChEBI" id="CHEBI:456216"/>
        <dbReference type="EC" id="6.3.4.2"/>
    </reaction>
</comment>
<comment type="catalytic activity">
    <reaction evidence="1">
        <text>L-glutamine + H2O = L-glutamate + NH4(+)</text>
        <dbReference type="Rhea" id="RHEA:15889"/>
        <dbReference type="ChEBI" id="CHEBI:15377"/>
        <dbReference type="ChEBI" id="CHEBI:28938"/>
        <dbReference type="ChEBI" id="CHEBI:29985"/>
        <dbReference type="ChEBI" id="CHEBI:58359"/>
    </reaction>
</comment>
<comment type="catalytic activity">
    <reaction evidence="1">
        <text>UTP + NH4(+) + ATP = CTP + ADP + phosphate + 2 H(+)</text>
        <dbReference type="Rhea" id="RHEA:16597"/>
        <dbReference type="ChEBI" id="CHEBI:15378"/>
        <dbReference type="ChEBI" id="CHEBI:28938"/>
        <dbReference type="ChEBI" id="CHEBI:30616"/>
        <dbReference type="ChEBI" id="CHEBI:37563"/>
        <dbReference type="ChEBI" id="CHEBI:43474"/>
        <dbReference type="ChEBI" id="CHEBI:46398"/>
        <dbReference type="ChEBI" id="CHEBI:456216"/>
    </reaction>
</comment>
<comment type="activity regulation">
    <text evidence="1">Allosterically activated by GTP, when glutamine is the substrate; GTP has no effect on the reaction when ammonia is the substrate. The allosteric effector GTP functions by stabilizing the protein conformation that binds the tetrahedral intermediate(s) formed during glutamine hydrolysis. Inhibited by the product CTP, via allosteric rather than competitive inhibition.</text>
</comment>
<comment type="pathway">
    <text evidence="1">Pyrimidine metabolism; CTP biosynthesis via de novo pathway; CTP from UDP: step 2/2.</text>
</comment>
<comment type="subunit">
    <text evidence="1">Homotetramer.</text>
</comment>
<comment type="miscellaneous">
    <text evidence="1">CTPSs have evolved a hybrid strategy for distinguishing between UTP and CTP. The overlapping regions of the product feedback inhibitory and substrate sites recognize a common feature in both compounds, the triphosphate moiety. To differentiate isosteric substrate and product pyrimidine rings, an additional pocket far from the expected kinase/ligase catalytic site, specifically recognizes the cytosine and ribose portions of the product inhibitor.</text>
</comment>
<comment type="similarity">
    <text evidence="1">Belongs to the CTP synthase family.</text>
</comment>
<evidence type="ECO:0000255" key="1">
    <source>
        <dbReference type="HAMAP-Rule" id="MF_01227"/>
    </source>
</evidence>
<gene>
    <name evidence="1" type="primary">pyrG</name>
    <name type="ordered locus">bbp_376</name>
</gene>
<organism>
    <name type="scientific">Buchnera aphidicola subsp. Baizongia pistaciae (strain Bp)</name>
    <dbReference type="NCBI Taxonomy" id="224915"/>
    <lineage>
        <taxon>Bacteria</taxon>
        <taxon>Pseudomonadati</taxon>
        <taxon>Pseudomonadota</taxon>
        <taxon>Gammaproteobacteria</taxon>
        <taxon>Enterobacterales</taxon>
        <taxon>Erwiniaceae</taxon>
        <taxon>Buchnera</taxon>
    </lineage>
</organism>
<reference key="1">
    <citation type="journal article" date="2003" name="Proc. Natl. Acad. Sci. U.S.A.">
        <title>Reductive genome evolution in Buchnera aphidicola.</title>
        <authorList>
            <person name="van Ham R.C.H.J."/>
            <person name="Kamerbeek J."/>
            <person name="Palacios C."/>
            <person name="Rausell C."/>
            <person name="Abascal F."/>
            <person name="Bastolla U."/>
            <person name="Fernandez J.M."/>
            <person name="Jimenez L."/>
            <person name="Postigo M."/>
            <person name="Silva F.J."/>
            <person name="Tamames J."/>
            <person name="Viguera E."/>
            <person name="Latorre A."/>
            <person name="Valencia A."/>
            <person name="Moran F."/>
            <person name="Moya A."/>
        </authorList>
    </citation>
    <scope>NUCLEOTIDE SEQUENCE [LARGE SCALE GENOMIC DNA]</scope>
    <source>
        <strain>Bp</strain>
    </source>
</reference>
<sequence>MKKRFIFITGGVVSSLGKGITTAALAAVLEARNLNVTIIKLDPYINIDPGTISPEQHGEVFVTEDGAETDLDLGHYERFIRTKMTRKNNFTTGSIYSEVLNKERKGEYLGATIQIIPHITNTIKKRIISCAHNVDIVFVEVGGTVGDIESLPFLEAIRQIAIDIGRENTIYIHLTLVPYISITKEIKTKPTQHSVKELLSIGIQPDILICRSQYTIPIQARSKIALFCNVLKESVISLINVDSIYKIPKLLNLQKVDQIICHHFKLKVPPADLSEWDEVIYNELNTNNVVTIGIIGKYIKSPDAYKSVIEALKHGGIKNKTVVKIKLINSEKIEKNGTNRLNCLHGILIPGGFGHRGITGKLITVEYARINNVPFFGICLGMQIALIEFFRNVIGLKDANSTEFSQNCQHPIISLIPKGNRNLPNINNNVKKKLGGTMRLGNQTCYLKQDSISHKLYGKNIISERHRHRYEVNNKFINKIEKYGLKITGKSKKNKLVEIIELSNHLWFIACQFHPEFTSTPRDGHPLFIDFIKAAIQYKKIKQK</sequence>